<accession>Q3YWC5</accession>
<keyword id="KW-0143">Chaperone</keyword>
<keyword id="KW-0963">Cytoplasm</keyword>
<keyword id="KW-1185">Reference proteome</keyword>
<keyword id="KW-0346">Stress response</keyword>
<reference key="1">
    <citation type="journal article" date="2005" name="Nucleic Acids Res.">
        <title>Genome dynamics and diversity of Shigella species, the etiologic agents of bacillary dysentery.</title>
        <authorList>
            <person name="Yang F."/>
            <person name="Yang J."/>
            <person name="Zhang X."/>
            <person name="Chen L."/>
            <person name="Jiang Y."/>
            <person name="Yan Y."/>
            <person name="Tang X."/>
            <person name="Wang J."/>
            <person name="Xiong Z."/>
            <person name="Dong J."/>
            <person name="Xue Y."/>
            <person name="Zhu Y."/>
            <person name="Xu X."/>
            <person name="Sun L."/>
            <person name="Chen S."/>
            <person name="Nie H."/>
            <person name="Peng J."/>
            <person name="Xu J."/>
            <person name="Wang Y."/>
            <person name="Yuan Z."/>
            <person name="Wen Y."/>
            <person name="Yao Z."/>
            <person name="Shen Y."/>
            <person name="Qiang B."/>
            <person name="Hou Y."/>
            <person name="Yu J."/>
            <person name="Jin Q."/>
        </authorList>
    </citation>
    <scope>NUCLEOTIDE SEQUENCE [LARGE SCALE GENOMIC DNA]</scope>
    <source>
        <strain>Ss046</strain>
    </source>
</reference>
<name>IBPA_SHISS</name>
<organism>
    <name type="scientific">Shigella sonnei (strain Ss046)</name>
    <dbReference type="NCBI Taxonomy" id="300269"/>
    <lineage>
        <taxon>Bacteria</taxon>
        <taxon>Pseudomonadati</taxon>
        <taxon>Pseudomonadota</taxon>
        <taxon>Gammaproteobacteria</taxon>
        <taxon>Enterobacterales</taxon>
        <taxon>Enterobacteriaceae</taxon>
        <taxon>Shigella</taxon>
    </lineage>
</organism>
<feature type="chain" id="PRO_1000022026" description="Small heat shock protein IbpA">
    <location>
        <begin position="1"/>
        <end position="137"/>
    </location>
</feature>
<feature type="domain" description="sHSP" evidence="2">
    <location>
        <begin position="28"/>
        <end position="137"/>
    </location>
</feature>
<sequence>MRNFDLSPLYRSAIGFDRLFNHLENNQSQSNGGYPPYNVELVDENHYRIAIAVAGFAESELEITAQDNLLVVKGAHADEQKERTYLYQGIAERNFERKFQLAENIHVRGANLVNGLLYIDLERVIPEAKKPRRIEIN</sequence>
<comment type="function">
    <text evidence="1">Associates with aggregated proteins, together with IbpB, to stabilize and protect them from irreversible denaturation and extensive proteolysis during heat shock and oxidative stress. Aggregated proteins bound to the IbpAB complex are more efficiently refolded and reactivated by the ATP-dependent chaperone systems ClpB and DnaK/DnaJ/GrpE. Its activity is ATP-independent.</text>
</comment>
<comment type="subunit">
    <text evidence="1">Monomer. Forms homomultimers of about 100-150 subunits at optimal growth temperatures. Conformation changes to monomers at high temperatures or high ionic concentrations.</text>
</comment>
<comment type="subcellular location">
    <subcellularLocation>
        <location evidence="1">Cytoplasm</location>
    </subcellularLocation>
</comment>
<comment type="similarity">
    <text evidence="1 2">Belongs to the small heat shock protein (HSP20) family.</text>
</comment>
<gene>
    <name evidence="1" type="primary">ibpA</name>
    <name type="ordered locus">SSON_3638</name>
</gene>
<dbReference type="EMBL" id="CP000038">
    <property type="protein sequence ID" value="AAZ90187.1"/>
    <property type="molecule type" value="Genomic_DNA"/>
</dbReference>
<dbReference type="RefSeq" id="WP_001243437.1">
    <property type="nucleotide sequence ID" value="NC_007384.1"/>
</dbReference>
<dbReference type="SMR" id="Q3YWC5"/>
<dbReference type="GeneID" id="93778428"/>
<dbReference type="KEGG" id="ssn:SSON_3638"/>
<dbReference type="HOGENOM" id="CLU_046737_4_2_6"/>
<dbReference type="Proteomes" id="UP000002529">
    <property type="component" value="Chromosome"/>
</dbReference>
<dbReference type="GO" id="GO:0005737">
    <property type="term" value="C:cytoplasm"/>
    <property type="evidence" value="ECO:0007669"/>
    <property type="project" value="UniProtKB-SubCell"/>
</dbReference>
<dbReference type="GO" id="GO:0050821">
    <property type="term" value="P:protein stabilization"/>
    <property type="evidence" value="ECO:0007669"/>
    <property type="project" value="UniProtKB-UniRule"/>
</dbReference>
<dbReference type="CDD" id="cd06470">
    <property type="entry name" value="ACD_IbpA-B_like"/>
    <property type="match status" value="1"/>
</dbReference>
<dbReference type="FunFam" id="2.60.40.790:FF:000002">
    <property type="entry name" value="Small heat shock protein IbpA"/>
    <property type="match status" value="1"/>
</dbReference>
<dbReference type="Gene3D" id="2.60.40.790">
    <property type="match status" value="1"/>
</dbReference>
<dbReference type="HAMAP" id="MF_02000">
    <property type="entry name" value="HSP20_IbpA"/>
    <property type="match status" value="1"/>
</dbReference>
<dbReference type="InterPro" id="IPR002068">
    <property type="entry name" value="A-crystallin/Hsp20_dom"/>
</dbReference>
<dbReference type="InterPro" id="IPR037913">
    <property type="entry name" value="ACD_IbpA/B"/>
</dbReference>
<dbReference type="InterPro" id="IPR008978">
    <property type="entry name" value="HSP20-like_chaperone"/>
</dbReference>
<dbReference type="InterPro" id="IPR023728">
    <property type="entry name" value="HSP20_IbpA"/>
</dbReference>
<dbReference type="NCBIfam" id="NF008013">
    <property type="entry name" value="PRK10743.1"/>
    <property type="match status" value="1"/>
</dbReference>
<dbReference type="PANTHER" id="PTHR47062">
    <property type="match status" value="1"/>
</dbReference>
<dbReference type="PANTHER" id="PTHR47062:SF1">
    <property type="entry name" value="SMALL HEAT SHOCK PROTEIN IBPA"/>
    <property type="match status" value="1"/>
</dbReference>
<dbReference type="Pfam" id="PF00011">
    <property type="entry name" value="HSP20"/>
    <property type="match status" value="1"/>
</dbReference>
<dbReference type="SUPFAM" id="SSF49764">
    <property type="entry name" value="HSP20-like chaperones"/>
    <property type="match status" value="1"/>
</dbReference>
<dbReference type="PROSITE" id="PS01031">
    <property type="entry name" value="SHSP"/>
    <property type="match status" value="1"/>
</dbReference>
<evidence type="ECO:0000255" key="1">
    <source>
        <dbReference type="HAMAP-Rule" id="MF_02000"/>
    </source>
</evidence>
<evidence type="ECO:0000255" key="2">
    <source>
        <dbReference type="PROSITE-ProRule" id="PRU00285"/>
    </source>
</evidence>
<protein>
    <recommendedName>
        <fullName evidence="1">Small heat shock protein IbpA</fullName>
    </recommendedName>
    <alternativeName>
        <fullName evidence="1">16 kDa heat shock protein A</fullName>
    </alternativeName>
</protein>
<proteinExistence type="inferred from homology"/>